<dbReference type="EC" id="3.2.2.-" evidence="1"/>
<dbReference type="EMBL" id="BX571857">
    <property type="protein sequence ID" value="CAG44048.1"/>
    <property type="molecule type" value="Genomic_DNA"/>
</dbReference>
<dbReference type="RefSeq" id="WP_000348300.1">
    <property type="nucleotide sequence ID" value="NC_002953.3"/>
</dbReference>
<dbReference type="SMR" id="Q6G6X6"/>
<dbReference type="KEGG" id="sas:SAS2235"/>
<dbReference type="HOGENOM" id="CLU_060471_2_0_9"/>
<dbReference type="GO" id="GO:0003905">
    <property type="term" value="F:alkylbase DNA N-glycosylase activity"/>
    <property type="evidence" value="ECO:0007669"/>
    <property type="project" value="InterPro"/>
</dbReference>
<dbReference type="GO" id="GO:0003677">
    <property type="term" value="F:DNA binding"/>
    <property type="evidence" value="ECO:0007669"/>
    <property type="project" value="InterPro"/>
</dbReference>
<dbReference type="GO" id="GO:0006284">
    <property type="term" value="P:base-excision repair"/>
    <property type="evidence" value="ECO:0007669"/>
    <property type="project" value="InterPro"/>
</dbReference>
<dbReference type="CDD" id="cd00540">
    <property type="entry name" value="AAG"/>
    <property type="match status" value="1"/>
</dbReference>
<dbReference type="FunFam" id="3.10.300.10:FF:000001">
    <property type="entry name" value="Putative 3-methyladenine DNA glycosylase"/>
    <property type="match status" value="1"/>
</dbReference>
<dbReference type="Gene3D" id="3.10.300.10">
    <property type="entry name" value="Methylpurine-DNA glycosylase (MPG)"/>
    <property type="match status" value="1"/>
</dbReference>
<dbReference type="HAMAP" id="MF_00527">
    <property type="entry name" value="3MGH"/>
    <property type="match status" value="1"/>
</dbReference>
<dbReference type="InterPro" id="IPR011034">
    <property type="entry name" value="Formyl_transferase-like_C_sf"/>
</dbReference>
<dbReference type="InterPro" id="IPR003180">
    <property type="entry name" value="MPG"/>
</dbReference>
<dbReference type="InterPro" id="IPR036995">
    <property type="entry name" value="MPG_sf"/>
</dbReference>
<dbReference type="NCBIfam" id="TIGR00567">
    <property type="entry name" value="3mg"/>
    <property type="match status" value="1"/>
</dbReference>
<dbReference type="PANTHER" id="PTHR10429">
    <property type="entry name" value="DNA-3-METHYLADENINE GLYCOSYLASE"/>
    <property type="match status" value="1"/>
</dbReference>
<dbReference type="PANTHER" id="PTHR10429:SF0">
    <property type="entry name" value="DNA-3-METHYLADENINE GLYCOSYLASE"/>
    <property type="match status" value="1"/>
</dbReference>
<dbReference type="Pfam" id="PF02245">
    <property type="entry name" value="Pur_DNA_glyco"/>
    <property type="match status" value="1"/>
</dbReference>
<dbReference type="SUPFAM" id="SSF50486">
    <property type="entry name" value="FMT C-terminal domain-like"/>
    <property type="match status" value="1"/>
</dbReference>
<feature type="chain" id="PRO_0000100107" description="Putative 3-methyladenine DNA glycosylase">
    <location>
        <begin position="1"/>
        <end position="202"/>
    </location>
</feature>
<keyword id="KW-0227">DNA damage</keyword>
<keyword id="KW-0234">DNA repair</keyword>
<keyword id="KW-0378">Hydrolase</keyword>
<organism>
    <name type="scientific">Staphylococcus aureus (strain MSSA476)</name>
    <dbReference type="NCBI Taxonomy" id="282459"/>
    <lineage>
        <taxon>Bacteria</taxon>
        <taxon>Bacillati</taxon>
        <taxon>Bacillota</taxon>
        <taxon>Bacilli</taxon>
        <taxon>Bacillales</taxon>
        <taxon>Staphylococcaceae</taxon>
        <taxon>Staphylococcus</taxon>
    </lineage>
</organism>
<name>3MGH_STAAS</name>
<accession>Q6G6X6</accession>
<proteinExistence type="inferred from homology"/>
<protein>
    <recommendedName>
        <fullName evidence="1">Putative 3-methyladenine DNA glycosylase</fullName>
        <ecNumber evidence="1">3.2.2.-</ecNumber>
    </recommendedName>
</protein>
<evidence type="ECO:0000255" key="1">
    <source>
        <dbReference type="HAMAP-Rule" id="MF_00527"/>
    </source>
</evidence>
<sequence length="202" mass="22771">MDFVNNDTRQIAKNLLGVKVIYQDTTQTYTGYIVETEAYLGLNDRAAHGYGGKITPKVTSLYKRGGTIYAHVMHTHLLINFVTKSEGIPEGVLIRAIEPEEGLSAMFRNRGKKGYEVTNGPGKWTKAFNIPRAIDGATLNDCRLSIDTKNRKYPKDIIASPRIGIPNKGDWTHKSLRYTVKGNPFVSRMRKSDCMFPEDTWK</sequence>
<gene>
    <name type="ordered locus">SAS2235</name>
</gene>
<reference key="1">
    <citation type="journal article" date="2004" name="Proc. Natl. Acad. Sci. U.S.A.">
        <title>Complete genomes of two clinical Staphylococcus aureus strains: evidence for the rapid evolution of virulence and drug resistance.</title>
        <authorList>
            <person name="Holden M.T.G."/>
            <person name="Feil E.J."/>
            <person name="Lindsay J.A."/>
            <person name="Peacock S.J."/>
            <person name="Day N.P.J."/>
            <person name="Enright M.C."/>
            <person name="Foster T.J."/>
            <person name="Moore C.E."/>
            <person name="Hurst L."/>
            <person name="Atkin R."/>
            <person name="Barron A."/>
            <person name="Bason N."/>
            <person name="Bentley S.D."/>
            <person name="Chillingworth C."/>
            <person name="Chillingworth T."/>
            <person name="Churcher C."/>
            <person name="Clark L."/>
            <person name="Corton C."/>
            <person name="Cronin A."/>
            <person name="Doggett J."/>
            <person name="Dowd L."/>
            <person name="Feltwell T."/>
            <person name="Hance Z."/>
            <person name="Harris B."/>
            <person name="Hauser H."/>
            <person name="Holroyd S."/>
            <person name="Jagels K."/>
            <person name="James K.D."/>
            <person name="Lennard N."/>
            <person name="Line A."/>
            <person name="Mayes R."/>
            <person name="Moule S."/>
            <person name="Mungall K."/>
            <person name="Ormond D."/>
            <person name="Quail M.A."/>
            <person name="Rabbinowitsch E."/>
            <person name="Rutherford K.M."/>
            <person name="Sanders M."/>
            <person name="Sharp S."/>
            <person name="Simmonds M."/>
            <person name="Stevens K."/>
            <person name="Whitehead S."/>
            <person name="Barrell B.G."/>
            <person name="Spratt B.G."/>
            <person name="Parkhill J."/>
        </authorList>
    </citation>
    <scope>NUCLEOTIDE SEQUENCE [LARGE SCALE GENOMIC DNA]</scope>
    <source>
        <strain>MSSA476</strain>
    </source>
</reference>
<comment type="similarity">
    <text evidence="1">Belongs to the DNA glycosylase MPG family.</text>
</comment>